<accession>A1A8S7</accession>
<organism>
    <name type="scientific">Escherichia coli O1:K1 / APEC</name>
    <dbReference type="NCBI Taxonomy" id="405955"/>
    <lineage>
        <taxon>Bacteria</taxon>
        <taxon>Pseudomonadati</taxon>
        <taxon>Pseudomonadota</taxon>
        <taxon>Gammaproteobacteria</taxon>
        <taxon>Enterobacterales</taxon>
        <taxon>Enterobacteriaceae</taxon>
        <taxon>Escherichia</taxon>
    </lineage>
</organism>
<gene>
    <name evidence="1" type="primary">ybeY</name>
    <name type="ordered locus">Ecok1_05730</name>
    <name type="ORF">APECO1_1404</name>
</gene>
<dbReference type="EC" id="3.1.-.-" evidence="1"/>
<dbReference type="EMBL" id="CP000468">
    <property type="protein sequence ID" value="ABJ00067.1"/>
    <property type="molecule type" value="Genomic_DNA"/>
</dbReference>
<dbReference type="RefSeq" id="WP_000084468.1">
    <property type="nucleotide sequence ID" value="NC_008563.1"/>
</dbReference>
<dbReference type="SMR" id="A1A8S7"/>
<dbReference type="KEGG" id="ecv:APECO1_1404"/>
<dbReference type="HOGENOM" id="CLU_106710_0_1_6"/>
<dbReference type="Proteomes" id="UP000008216">
    <property type="component" value="Chromosome"/>
</dbReference>
<dbReference type="GO" id="GO:0005737">
    <property type="term" value="C:cytoplasm"/>
    <property type="evidence" value="ECO:0007669"/>
    <property type="project" value="UniProtKB-SubCell"/>
</dbReference>
<dbReference type="GO" id="GO:0004222">
    <property type="term" value="F:metalloendopeptidase activity"/>
    <property type="evidence" value="ECO:0007669"/>
    <property type="project" value="InterPro"/>
</dbReference>
<dbReference type="GO" id="GO:0004521">
    <property type="term" value="F:RNA endonuclease activity"/>
    <property type="evidence" value="ECO:0007669"/>
    <property type="project" value="UniProtKB-UniRule"/>
</dbReference>
<dbReference type="GO" id="GO:0008270">
    <property type="term" value="F:zinc ion binding"/>
    <property type="evidence" value="ECO:0007669"/>
    <property type="project" value="UniProtKB-UniRule"/>
</dbReference>
<dbReference type="GO" id="GO:0006364">
    <property type="term" value="P:rRNA processing"/>
    <property type="evidence" value="ECO:0007669"/>
    <property type="project" value="UniProtKB-UniRule"/>
</dbReference>
<dbReference type="FunFam" id="3.40.390.30:FF:000001">
    <property type="entry name" value="Endoribonuclease YbeY"/>
    <property type="match status" value="1"/>
</dbReference>
<dbReference type="Gene3D" id="3.40.390.30">
    <property type="entry name" value="Metalloproteases ('zincins'), catalytic domain"/>
    <property type="match status" value="1"/>
</dbReference>
<dbReference type="HAMAP" id="MF_00009">
    <property type="entry name" value="Endoribonucl_YbeY"/>
    <property type="match status" value="1"/>
</dbReference>
<dbReference type="InterPro" id="IPR023091">
    <property type="entry name" value="MetalPrtase_cat_dom_sf_prd"/>
</dbReference>
<dbReference type="InterPro" id="IPR002036">
    <property type="entry name" value="YbeY"/>
</dbReference>
<dbReference type="InterPro" id="IPR020549">
    <property type="entry name" value="YbeY_CS"/>
</dbReference>
<dbReference type="NCBIfam" id="TIGR00043">
    <property type="entry name" value="rRNA maturation RNase YbeY"/>
    <property type="match status" value="1"/>
</dbReference>
<dbReference type="PANTHER" id="PTHR46986">
    <property type="entry name" value="ENDORIBONUCLEASE YBEY, CHLOROPLASTIC"/>
    <property type="match status" value="1"/>
</dbReference>
<dbReference type="PANTHER" id="PTHR46986:SF1">
    <property type="entry name" value="ENDORIBONUCLEASE YBEY, CHLOROPLASTIC"/>
    <property type="match status" value="1"/>
</dbReference>
<dbReference type="Pfam" id="PF02130">
    <property type="entry name" value="YbeY"/>
    <property type="match status" value="1"/>
</dbReference>
<dbReference type="SUPFAM" id="SSF55486">
    <property type="entry name" value="Metalloproteases ('zincins'), catalytic domain"/>
    <property type="match status" value="1"/>
</dbReference>
<dbReference type="PROSITE" id="PS01306">
    <property type="entry name" value="UPF0054"/>
    <property type="match status" value="1"/>
</dbReference>
<comment type="function">
    <text evidence="1">Single strand-specific metallo-endoribonuclease involved in late-stage 70S ribosome quality control and in maturation of the 3' terminus of the 16S rRNA.</text>
</comment>
<comment type="cofactor">
    <cofactor evidence="1">
        <name>Zn(2+)</name>
        <dbReference type="ChEBI" id="CHEBI:29105"/>
    </cofactor>
    <text evidence="1">Binds 1 zinc ion.</text>
</comment>
<comment type="subcellular location">
    <subcellularLocation>
        <location evidence="1">Cytoplasm</location>
    </subcellularLocation>
</comment>
<comment type="similarity">
    <text evidence="1">Belongs to the endoribonuclease YbeY family.</text>
</comment>
<feature type="chain" id="PRO_0000284205" description="Endoribonuclease YbeY">
    <location>
        <begin position="1"/>
        <end position="155"/>
    </location>
</feature>
<feature type="binding site" evidence="1">
    <location>
        <position position="114"/>
    </location>
    <ligand>
        <name>Zn(2+)</name>
        <dbReference type="ChEBI" id="CHEBI:29105"/>
        <note>catalytic</note>
    </ligand>
</feature>
<feature type="binding site" evidence="1">
    <location>
        <position position="118"/>
    </location>
    <ligand>
        <name>Zn(2+)</name>
        <dbReference type="ChEBI" id="CHEBI:29105"/>
        <note>catalytic</note>
    </ligand>
</feature>
<feature type="binding site" evidence="1">
    <location>
        <position position="124"/>
    </location>
    <ligand>
        <name>Zn(2+)</name>
        <dbReference type="ChEBI" id="CHEBI:29105"/>
        <note>catalytic</note>
    </ligand>
</feature>
<keyword id="KW-0963">Cytoplasm</keyword>
<keyword id="KW-0255">Endonuclease</keyword>
<keyword id="KW-0378">Hydrolase</keyword>
<keyword id="KW-0479">Metal-binding</keyword>
<keyword id="KW-0540">Nuclease</keyword>
<keyword id="KW-1185">Reference proteome</keyword>
<keyword id="KW-0690">Ribosome biogenesis</keyword>
<keyword id="KW-0698">rRNA processing</keyword>
<keyword id="KW-0862">Zinc</keyword>
<sequence>MSQVILDLQLACEDNSGLPEESQFQTWLNAVIPQFQEESEVTIRVVDTAESHSLNLTYRGKDKPTNVLSFPFEVPPGMEMSLLGDLVICRQVVEKEAQEQGKPLEAHWAHMVVHGSLHLLGYDHIEDDEAEEMEALETEIMLALDYEDPYIAEKE</sequence>
<proteinExistence type="inferred from homology"/>
<evidence type="ECO:0000255" key="1">
    <source>
        <dbReference type="HAMAP-Rule" id="MF_00009"/>
    </source>
</evidence>
<name>YBEY_ECOK1</name>
<reference key="1">
    <citation type="journal article" date="2007" name="J. Bacteriol.">
        <title>The genome sequence of avian pathogenic Escherichia coli strain O1:K1:H7 shares strong similarities with human extraintestinal pathogenic E. coli genomes.</title>
        <authorList>
            <person name="Johnson T.J."/>
            <person name="Kariyawasam S."/>
            <person name="Wannemuehler Y."/>
            <person name="Mangiamele P."/>
            <person name="Johnson S.J."/>
            <person name="Doetkott C."/>
            <person name="Skyberg J.A."/>
            <person name="Lynne A.M."/>
            <person name="Johnson J.R."/>
            <person name="Nolan L.K."/>
        </authorList>
    </citation>
    <scope>NUCLEOTIDE SEQUENCE [LARGE SCALE GENOMIC DNA]</scope>
</reference>
<protein>
    <recommendedName>
        <fullName evidence="1">Endoribonuclease YbeY</fullName>
        <ecNumber evidence="1">3.1.-.-</ecNumber>
    </recommendedName>
</protein>